<accession>P54269</accession>
<accession>Q5BIH8</accession>
<accession>Q5U1A6</accession>
<accession>Q8MR03</accession>
<accession>Q9VU00</accession>
<protein>
    <recommendedName>
        <fullName>Homeobox protein caupolican</fullName>
    </recommendedName>
</protein>
<name>CAUP_DROME</name>
<comment type="function">
    <text evidence="3">Controls proneural and vein forming genes. Positive transcriptional controller of ac-sc (achaete-scute). May act as an activator that interacts with the transcriptional complex assembled on the ac and sc promoters and participates in transcription initiation.</text>
</comment>
<comment type="subcellular location">
    <subcellularLocation>
        <location evidence="4">Nucleus</location>
    </subcellularLocation>
</comment>
<comment type="miscellaneous">
    <text>'Caupolican' is named after the Araucanian American-Indian tribe, also called mohawks, who shaved all but a medial stripe of hairs on the head.</text>
</comment>
<comment type="similarity">
    <text evidence="4">Belongs to the TALE/IRO homeobox family.</text>
</comment>
<dbReference type="EMBL" id="X95178">
    <property type="protein sequence ID" value="CAA64485.1"/>
    <property type="molecule type" value="mRNA"/>
</dbReference>
<dbReference type="EMBL" id="AE014296">
    <property type="protein sequence ID" value="AAF49895.1"/>
    <property type="molecule type" value="Genomic_DNA"/>
</dbReference>
<dbReference type="EMBL" id="BT015986">
    <property type="protein sequence ID" value="AAV36871.1"/>
    <property type="molecule type" value="mRNA"/>
</dbReference>
<dbReference type="EMBL" id="BT021246">
    <property type="protein sequence ID" value="AAX33394.1"/>
    <property type="molecule type" value="mRNA"/>
</dbReference>
<dbReference type="EMBL" id="AY122206">
    <property type="protein sequence ID" value="AAM52718.1"/>
    <property type="molecule type" value="mRNA"/>
</dbReference>
<dbReference type="RefSeq" id="NP_524046.2">
    <property type="nucleotide sequence ID" value="NM_079322.3"/>
</dbReference>
<dbReference type="SMR" id="P54269"/>
<dbReference type="BioGRID" id="64789">
    <property type="interactions" value="23"/>
</dbReference>
<dbReference type="DIP" id="DIP-18539N"/>
<dbReference type="FunCoup" id="P54269">
    <property type="interactions" value="85"/>
</dbReference>
<dbReference type="IntAct" id="P54269">
    <property type="interactions" value="14"/>
</dbReference>
<dbReference type="STRING" id="7227.FBpp0075641"/>
<dbReference type="GlyGen" id="P54269">
    <property type="glycosylation" value="2 sites"/>
</dbReference>
<dbReference type="PaxDb" id="7227-FBpp0075641"/>
<dbReference type="DNASU" id="39440"/>
<dbReference type="EnsemblMetazoa" id="FBtr0075909">
    <property type="protein sequence ID" value="FBpp0075641"/>
    <property type="gene ID" value="FBgn0015919"/>
</dbReference>
<dbReference type="GeneID" id="39440"/>
<dbReference type="KEGG" id="dme:Dmel_CG10605"/>
<dbReference type="AGR" id="FB:FBgn0015919"/>
<dbReference type="CTD" id="39440"/>
<dbReference type="FlyBase" id="FBgn0015919">
    <property type="gene designation" value="caup"/>
</dbReference>
<dbReference type="VEuPathDB" id="VectorBase:FBgn0015919"/>
<dbReference type="eggNOG" id="KOG0773">
    <property type="taxonomic scope" value="Eukaryota"/>
</dbReference>
<dbReference type="GeneTree" id="ENSGT00940000165426"/>
<dbReference type="HOGENOM" id="CLU_019586_0_0_1"/>
<dbReference type="InParanoid" id="P54269"/>
<dbReference type="OMA" id="PINMHRD"/>
<dbReference type="OrthoDB" id="5399138at2759"/>
<dbReference type="PhylomeDB" id="P54269"/>
<dbReference type="SignaLink" id="P54269"/>
<dbReference type="BioGRID-ORCS" id="39440">
    <property type="hits" value="0 hits in 3 CRISPR screens"/>
</dbReference>
<dbReference type="ChiTaRS" id="caup">
    <property type="organism name" value="fly"/>
</dbReference>
<dbReference type="GenomeRNAi" id="39440"/>
<dbReference type="PRO" id="PR:P54269"/>
<dbReference type="Proteomes" id="UP000000803">
    <property type="component" value="Chromosome 3L"/>
</dbReference>
<dbReference type="Bgee" id="FBgn0015919">
    <property type="expression patterns" value="Expressed in gustatory receptor neuron (Drosophila) in insect leg and 85 other cell types or tissues"/>
</dbReference>
<dbReference type="GO" id="GO:0005634">
    <property type="term" value="C:nucleus"/>
    <property type="evidence" value="ECO:0000250"/>
    <property type="project" value="FlyBase"/>
</dbReference>
<dbReference type="GO" id="GO:0003700">
    <property type="term" value="F:DNA-binding transcription factor activity"/>
    <property type="evidence" value="ECO:0000250"/>
    <property type="project" value="FlyBase"/>
</dbReference>
<dbReference type="GO" id="GO:0000981">
    <property type="term" value="F:DNA-binding transcription factor activity, RNA polymerase II-specific"/>
    <property type="evidence" value="ECO:0000250"/>
    <property type="project" value="FlyBase"/>
</dbReference>
<dbReference type="GO" id="GO:0000978">
    <property type="term" value="F:RNA polymerase II cis-regulatory region sequence-specific DNA binding"/>
    <property type="evidence" value="ECO:0000318"/>
    <property type="project" value="GO_Central"/>
</dbReference>
<dbReference type="GO" id="GO:0048468">
    <property type="term" value="P:cell development"/>
    <property type="evidence" value="ECO:0000318"/>
    <property type="project" value="GO_Central"/>
</dbReference>
<dbReference type="GO" id="GO:0001745">
    <property type="term" value="P:compound eye morphogenesis"/>
    <property type="evidence" value="ECO:0000315"/>
    <property type="project" value="FlyBase"/>
</dbReference>
<dbReference type="GO" id="GO:0045317">
    <property type="term" value="P:equator specification"/>
    <property type="evidence" value="ECO:0000304"/>
    <property type="project" value="FlyBase"/>
</dbReference>
<dbReference type="GO" id="GO:0007474">
    <property type="term" value="P:imaginal disc-derived wing vein specification"/>
    <property type="evidence" value="ECO:0000316"/>
    <property type="project" value="FlyBase"/>
</dbReference>
<dbReference type="GO" id="GO:0042693">
    <property type="term" value="P:muscle cell fate commitment"/>
    <property type="evidence" value="ECO:0000316"/>
    <property type="project" value="FlyBase"/>
</dbReference>
<dbReference type="GO" id="GO:0045926">
    <property type="term" value="P:negative regulation of growth"/>
    <property type="evidence" value="ECO:0000315"/>
    <property type="project" value="FlyBase"/>
</dbReference>
<dbReference type="GO" id="GO:0030182">
    <property type="term" value="P:neuron differentiation"/>
    <property type="evidence" value="ECO:0000318"/>
    <property type="project" value="GO_Central"/>
</dbReference>
<dbReference type="GO" id="GO:0045944">
    <property type="term" value="P:positive regulation of transcription by RNA polymerase II"/>
    <property type="evidence" value="ECO:0000250"/>
    <property type="project" value="FlyBase"/>
</dbReference>
<dbReference type="GO" id="GO:0007346">
    <property type="term" value="P:regulation of mitotic cell cycle"/>
    <property type="evidence" value="ECO:0000316"/>
    <property type="project" value="FlyBase"/>
</dbReference>
<dbReference type="GO" id="GO:0006357">
    <property type="term" value="P:regulation of transcription by RNA polymerase II"/>
    <property type="evidence" value="ECO:0000318"/>
    <property type="project" value="GO_Central"/>
</dbReference>
<dbReference type="CDD" id="cd00086">
    <property type="entry name" value="homeodomain"/>
    <property type="match status" value="1"/>
</dbReference>
<dbReference type="FunFam" id="1.10.10.60:FF:000003">
    <property type="entry name" value="Iroquois-class homeobox protein IRX"/>
    <property type="match status" value="1"/>
</dbReference>
<dbReference type="Gene3D" id="1.10.10.60">
    <property type="entry name" value="Homeodomain-like"/>
    <property type="match status" value="1"/>
</dbReference>
<dbReference type="InterPro" id="IPR001356">
    <property type="entry name" value="HD"/>
</dbReference>
<dbReference type="InterPro" id="IPR017970">
    <property type="entry name" value="Homeobox_CS"/>
</dbReference>
<dbReference type="InterPro" id="IPR009057">
    <property type="entry name" value="Homeodomain-like_sf"/>
</dbReference>
<dbReference type="InterPro" id="IPR003893">
    <property type="entry name" value="Iroquois_homeo"/>
</dbReference>
<dbReference type="InterPro" id="IPR008422">
    <property type="entry name" value="KN_HD"/>
</dbReference>
<dbReference type="PANTHER" id="PTHR11211:SF46">
    <property type="entry name" value="HOMEOBOX PROTEIN ARAUCAN-RELATED"/>
    <property type="match status" value="1"/>
</dbReference>
<dbReference type="PANTHER" id="PTHR11211">
    <property type="entry name" value="IROQUOIS-CLASS HOMEODOMAIN PROTEIN IRX"/>
    <property type="match status" value="1"/>
</dbReference>
<dbReference type="Pfam" id="PF05920">
    <property type="entry name" value="Homeobox_KN"/>
    <property type="match status" value="1"/>
</dbReference>
<dbReference type="SMART" id="SM00389">
    <property type="entry name" value="HOX"/>
    <property type="match status" value="1"/>
</dbReference>
<dbReference type="SMART" id="SM00548">
    <property type="entry name" value="IRO"/>
    <property type="match status" value="1"/>
</dbReference>
<dbReference type="SUPFAM" id="SSF46689">
    <property type="entry name" value="Homeodomain-like"/>
    <property type="match status" value="1"/>
</dbReference>
<dbReference type="PROSITE" id="PS00027">
    <property type="entry name" value="HOMEOBOX_1"/>
    <property type="match status" value="1"/>
</dbReference>
<dbReference type="PROSITE" id="PS50071">
    <property type="entry name" value="HOMEOBOX_2"/>
    <property type="match status" value="1"/>
</dbReference>
<proteinExistence type="evidence at transcript level"/>
<keyword id="KW-0010">Activator</keyword>
<keyword id="KW-0217">Developmental protein</keyword>
<keyword id="KW-0238">DNA-binding</keyword>
<keyword id="KW-0371">Homeobox</keyword>
<keyword id="KW-0539">Nucleus</keyword>
<keyword id="KW-1185">Reference proteome</keyword>
<keyword id="KW-0804">Transcription</keyword>
<keyword id="KW-0805">Transcription regulation</keyword>
<feature type="chain" id="PRO_0000048845" description="Homeobox protein caupolican">
    <location>
        <begin position="1"/>
        <end position="693"/>
    </location>
</feature>
<feature type="DNA-binding region" description="Homeobox; TALE-type" evidence="1">
    <location>
        <begin position="226"/>
        <end position="288"/>
    </location>
</feature>
<feature type="region of interest" description="Disordered" evidence="2">
    <location>
        <begin position="20"/>
        <end position="104"/>
    </location>
</feature>
<feature type="region of interest" description="Disordered" evidence="2">
    <location>
        <begin position="288"/>
        <end position="331"/>
    </location>
</feature>
<feature type="region of interest" description="Disordered" evidence="2">
    <location>
        <begin position="387"/>
        <end position="453"/>
    </location>
</feature>
<feature type="region of interest" description="Disordered" evidence="2">
    <location>
        <begin position="480"/>
        <end position="538"/>
    </location>
</feature>
<feature type="region of interest" description="Disordered" evidence="2">
    <location>
        <begin position="561"/>
        <end position="627"/>
    </location>
</feature>
<feature type="region of interest" description="Disordered" evidence="2">
    <location>
        <begin position="648"/>
        <end position="693"/>
    </location>
</feature>
<feature type="compositionally biased region" description="Low complexity" evidence="2">
    <location>
        <begin position="41"/>
        <end position="59"/>
    </location>
</feature>
<feature type="compositionally biased region" description="Basic and acidic residues" evidence="2">
    <location>
        <begin position="288"/>
        <end position="298"/>
    </location>
</feature>
<feature type="compositionally biased region" description="Basic and acidic residues" evidence="2">
    <location>
        <begin position="308"/>
        <end position="317"/>
    </location>
</feature>
<feature type="compositionally biased region" description="Low complexity" evidence="2">
    <location>
        <begin position="397"/>
        <end position="419"/>
    </location>
</feature>
<feature type="compositionally biased region" description="Low complexity" evidence="2">
    <location>
        <begin position="493"/>
        <end position="515"/>
    </location>
</feature>
<feature type="compositionally biased region" description="Basic residues" evidence="2">
    <location>
        <begin position="516"/>
        <end position="527"/>
    </location>
</feature>
<feature type="compositionally biased region" description="Low complexity" evidence="2">
    <location>
        <begin position="609"/>
        <end position="627"/>
    </location>
</feature>
<feature type="compositionally biased region" description="Basic residues" evidence="2">
    <location>
        <begin position="651"/>
        <end position="675"/>
    </location>
</feature>
<feature type="sequence conflict" description="In Ref. 1; CAA64485." evidence="4" ref="1">
    <original>C</original>
    <variation>R</variation>
    <location>
        <position position="106"/>
    </location>
</feature>
<feature type="sequence conflict" description="In Ref. 1; CAA64485." evidence="4" ref="1">
    <original>G</original>
    <variation>A</variation>
    <location>
        <position position="316"/>
    </location>
</feature>
<feature type="sequence conflict" description="In Ref. 4; AAV36871." evidence="4" ref="4">
    <original>H</original>
    <variation>N</variation>
    <location>
        <position position="518"/>
    </location>
</feature>
<feature type="sequence conflict" description="In Ref. 1; CAA64485." evidence="4" ref="1">
    <original>G</original>
    <variation>A</variation>
    <location>
        <position position="678"/>
    </location>
</feature>
<gene>
    <name type="primary">caup</name>
    <name type="ORF">CG10605</name>
</gene>
<sequence length="693" mass="73668">MAAYAQFGYAGYPTANQLTTANTDSQSGHGGGSPLSGTNEASLSPSGGSTATGLTAGPLSPGAVSQSSHHAGHKGLSTSPAEDVVGGDVPVGLSSAAQDLPSRGSCCENGRPIITDPVSGQTVCSCQYDPARLAIGGYSRMALPSGGVGVGVYGGPYPSNEQNPYPSIGVDNSAFYAPLSNPYGIKDTSPSTEMSAWTSASLQSTTGYYSYDPTLAAYGYGPNYDLAARRKNATRESTATLKAWLSEHKKNPYPTKGEKIMLAIITKMTLTQVSTWFANARRRLKKENKMTWEPKNKTEDDDDGMMSDDEKEKDAGDGGKLSTEAFDPGNQLIKSELGKAEKEVDSSGDQKLDLDREPHNLVAMRGLAPYATPPGAHPMHAAYSSYAQSHNTHTHPHPQQMQHHQQQQQQQQNQQQLQHHQMDQPYYHPGGYGQEESGEFAAQKNPLSRDCGIPVPASKPKIWSVADTAACKTPPPTAAYLGQNFYPPSSADQQLPHQPLQQHQQQQLQQLQQQQQHHHHPHHHHPHHSMELGSPLSMMSSYAGGSPYSRIPTAYTEAMGMHLPSSSSSSSSTGKLPPTHIHPAPQRVGFPEIQPDTPPQTPPTMKLNSSGGSSSSSGSSHSSSMHSVTPVTVASMVNILYSNTDSGYGHGHSHGHGHGHGHGLGHGHGLGHGHGHMGVTSNAYLTEGGRSGS</sequence>
<evidence type="ECO:0000255" key="1">
    <source>
        <dbReference type="PROSITE-ProRule" id="PRU00108"/>
    </source>
</evidence>
<evidence type="ECO:0000256" key="2">
    <source>
        <dbReference type="SAM" id="MobiDB-lite"/>
    </source>
</evidence>
<evidence type="ECO:0000269" key="3">
    <source>
    </source>
</evidence>
<evidence type="ECO:0000305" key="4"/>
<organism>
    <name type="scientific">Drosophila melanogaster</name>
    <name type="common">Fruit fly</name>
    <dbReference type="NCBI Taxonomy" id="7227"/>
    <lineage>
        <taxon>Eukaryota</taxon>
        <taxon>Metazoa</taxon>
        <taxon>Ecdysozoa</taxon>
        <taxon>Arthropoda</taxon>
        <taxon>Hexapoda</taxon>
        <taxon>Insecta</taxon>
        <taxon>Pterygota</taxon>
        <taxon>Neoptera</taxon>
        <taxon>Endopterygota</taxon>
        <taxon>Diptera</taxon>
        <taxon>Brachycera</taxon>
        <taxon>Muscomorpha</taxon>
        <taxon>Ephydroidea</taxon>
        <taxon>Drosophilidae</taxon>
        <taxon>Drosophila</taxon>
        <taxon>Sophophora</taxon>
    </lineage>
</organism>
<reference key="1">
    <citation type="journal article" date="1996" name="Cell">
        <title>Araucan and caupolican, two members of the novel iroquois complex, encode homeoproteins that control proneural and vein-forming genes.</title>
        <authorList>
            <person name="Gomez-Skarmeta J.-L."/>
            <person name="del Corral R.D."/>
            <person name="de la Calle-Mustienes E."/>
            <person name="Ferres-Marco D."/>
            <person name="Modolell J."/>
        </authorList>
    </citation>
    <scope>NUCLEOTIDE SEQUENCE [MRNA]</scope>
    <scope>FUNCTION</scope>
    <source>
        <tissue>Larva</tissue>
    </source>
</reference>
<reference key="2">
    <citation type="journal article" date="2000" name="Science">
        <title>The genome sequence of Drosophila melanogaster.</title>
        <authorList>
            <person name="Adams M.D."/>
            <person name="Celniker S.E."/>
            <person name="Holt R.A."/>
            <person name="Evans C.A."/>
            <person name="Gocayne J.D."/>
            <person name="Amanatides P.G."/>
            <person name="Scherer S.E."/>
            <person name="Li P.W."/>
            <person name="Hoskins R.A."/>
            <person name="Galle R.F."/>
            <person name="George R.A."/>
            <person name="Lewis S.E."/>
            <person name="Richards S."/>
            <person name="Ashburner M."/>
            <person name="Henderson S.N."/>
            <person name="Sutton G.G."/>
            <person name="Wortman J.R."/>
            <person name="Yandell M.D."/>
            <person name="Zhang Q."/>
            <person name="Chen L.X."/>
            <person name="Brandon R.C."/>
            <person name="Rogers Y.-H.C."/>
            <person name="Blazej R.G."/>
            <person name="Champe M."/>
            <person name="Pfeiffer B.D."/>
            <person name="Wan K.H."/>
            <person name="Doyle C."/>
            <person name="Baxter E.G."/>
            <person name="Helt G."/>
            <person name="Nelson C.R."/>
            <person name="Miklos G.L.G."/>
            <person name="Abril J.F."/>
            <person name="Agbayani A."/>
            <person name="An H.-J."/>
            <person name="Andrews-Pfannkoch C."/>
            <person name="Baldwin D."/>
            <person name="Ballew R.M."/>
            <person name="Basu A."/>
            <person name="Baxendale J."/>
            <person name="Bayraktaroglu L."/>
            <person name="Beasley E.M."/>
            <person name="Beeson K.Y."/>
            <person name="Benos P.V."/>
            <person name="Berman B.P."/>
            <person name="Bhandari D."/>
            <person name="Bolshakov S."/>
            <person name="Borkova D."/>
            <person name="Botchan M.R."/>
            <person name="Bouck J."/>
            <person name="Brokstein P."/>
            <person name="Brottier P."/>
            <person name="Burtis K.C."/>
            <person name="Busam D.A."/>
            <person name="Butler H."/>
            <person name="Cadieu E."/>
            <person name="Center A."/>
            <person name="Chandra I."/>
            <person name="Cherry J.M."/>
            <person name="Cawley S."/>
            <person name="Dahlke C."/>
            <person name="Davenport L.B."/>
            <person name="Davies P."/>
            <person name="de Pablos B."/>
            <person name="Delcher A."/>
            <person name="Deng Z."/>
            <person name="Mays A.D."/>
            <person name="Dew I."/>
            <person name="Dietz S.M."/>
            <person name="Dodson K."/>
            <person name="Doup L.E."/>
            <person name="Downes M."/>
            <person name="Dugan-Rocha S."/>
            <person name="Dunkov B.C."/>
            <person name="Dunn P."/>
            <person name="Durbin K.J."/>
            <person name="Evangelista C.C."/>
            <person name="Ferraz C."/>
            <person name="Ferriera S."/>
            <person name="Fleischmann W."/>
            <person name="Fosler C."/>
            <person name="Gabrielian A.E."/>
            <person name="Garg N.S."/>
            <person name="Gelbart W.M."/>
            <person name="Glasser K."/>
            <person name="Glodek A."/>
            <person name="Gong F."/>
            <person name="Gorrell J.H."/>
            <person name="Gu Z."/>
            <person name="Guan P."/>
            <person name="Harris M."/>
            <person name="Harris N.L."/>
            <person name="Harvey D.A."/>
            <person name="Heiman T.J."/>
            <person name="Hernandez J.R."/>
            <person name="Houck J."/>
            <person name="Hostin D."/>
            <person name="Houston K.A."/>
            <person name="Howland T.J."/>
            <person name="Wei M.-H."/>
            <person name="Ibegwam C."/>
            <person name="Jalali M."/>
            <person name="Kalush F."/>
            <person name="Karpen G.H."/>
            <person name="Ke Z."/>
            <person name="Kennison J.A."/>
            <person name="Ketchum K.A."/>
            <person name="Kimmel B.E."/>
            <person name="Kodira C.D."/>
            <person name="Kraft C.L."/>
            <person name="Kravitz S."/>
            <person name="Kulp D."/>
            <person name="Lai Z."/>
            <person name="Lasko P."/>
            <person name="Lei Y."/>
            <person name="Levitsky A.A."/>
            <person name="Li J.H."/>
            <person name="Li Z."/>
            <person name="Liang Y."/>
            <person name="Lin X."/>
            <person name="Liu X."/>
            <person name="Mattei B."/>
            <person name="McIntosh T.C."/>
            <person name="McLeod M.P."/>
            <person name="McPherson D."/>
            <person name="Merkulov G."/>
            <person name="Milshina N.V."/>
            <person name="Mobarry C."/>
            <person name="Morris J."/>
            <person name="Moshrefi A."/>
            <person name="Mount S.M."/>
            <person name="Moy M."/>
            <person name="Murphy B."/>
            <person name="Murphy L."/>
            <person name="Muzny D.M."/>
            <person name="Nelson D.L."/>
            <person name="Nelson D.R."/>
            <person name="Nelson K.A."/>
            <person name="Nixon K."/>
            <person name="Nusskern D.R."/>
            <person name="Pacleb J.M."/>
            <person name="Palazzolo M."/>
            <person name="Pittman G.S."/>
            <person name="Pan S."/>
            <person name="Pollard J."/>
            <person name="Puri V."/>
            <person name="Reese M.G."/>
            <person name="Reinert K."/>
            <person name="Remington K."/>
            <person name="Saunders R.D.C."/>
            <person name="Scheeler F."/>
            <person name="Shen H."/>
            <person name="Shue B.C."/>
            <person name="Siden-Kiamos I."/>
            <person name="Simpson M."/>
            <person name="Skupski M.P."/>
            <person name="Smith T.J."/>
            <person name="Spier E."/>
            <person name="Spradling A.C."/>
            <person name="Stapleton M."/>
            <person name="Strong R."/>
            <person name="Sun E."/>
            <person name="Svirskas R."/>
            <person name="Tector C."/>
            <person name="Turner R."/>
            <person name="Venter E."/>
            <person name="Wang A.H."/>
            <person name="Wang X."/>
            <person name="Wang Z.-Y."/>
            <person name="Wassarman D.A."/>
            <person name="Weinstock G.M."/>
            <person name="Weissenbach J."/>
            <person name="Williams S.M."/>
            <person name="Woodage T."/>
            <person name="Worley K.C."/>
            <person name="Wu D."/>
            <person name="Yang S."/>
            <person name="Yao Q.A."/>
            <person name="Ye J."/>
            <person name="Yeh R.-F."/>
            <person name="Zaveri J.S."/>
            <person name="Zhan M."/>
            <person name="Zhang G."/>
            <person name="Zhao Q."/>
            <person name="Zheng L."/>
            <person name="Zheng X.H."/>
            <person name="Zhong F.N."/>
            <person name="Zhong W."/>
            <person name="Zhou X."/>
            <person name="Zhu S.C."/>
            <person name="Zhu X."/>
            <person name="Smith H.O."/>
            <person name="Gibbs R.A."/>
            <person name="Myers E.W."/>
            <person name="Rubin G.M."/>
            <person name="Venter J.C."/>
        </authorList>
    </citation>
    <scope>NUCLEOTIDE SEQUENCE [LARGE SCALE GENOMIC DNA]</scope>
    <source>
        <strain>Berkeley</strain>
    </source>
</reference>
<reference key="3">
    <citation type="journal article" date="2002" name="Genome Biol.">
        <title>Annotation of the Drosophila melanogaster euchromatic genome: a systematic review.</title>
        <authorList>
            <person name="Misra S."/>
            <person name="Crosby M.A."/>
            <person name="Mungall C.J."/>
            <person name="Matthews B.B."/>
            <person name="Campbell K.S."/>
            <person name="Hradecky P."/>
            <person name="Huang Y."/>
            <person name="Kaminker J.S."/>
            <person name="Millburn G.H."/>
            <person name="Prochnik S.E."/>
            <person name="Smith C.D."/>
            <person name="Tupy J.L."/>
            <person name="Whitfield E.J."/>
            <person name="Bayraktaroglu L."/>
            <person name="Berman B.P."/>
            <person name="Bettencourt B.R."/>
            <person name="Celniker S.E."/>
            <person name="de Grey A.D.N.J."/>
            <person name="Drysdale R.A."/>
            <person name="Harris N.L."/>
            <person name="Richter J."/>
            <person name="Russo S."/>
            <person name="Schroeder A.J."/>
            <person name="Shu S.Q."/>
            <person name="Stapleton M."/>
            <person name="Yamada C."/>
            <person name="Ashburner M."/>
            <person name="Gelbart W.M."/>
            <person name="Rubin G.M."/>
            <person name="Lewis S.E."/>
        </authorList>
    </citation>
    <scope>GENOME REANNOTATION</scope>
    <source>
        <strain>Berkeley</strain>
    </source>
</reference>
<reference key="4">
    <citation type="submission" date="2006-06" db="EMBL/GenBank/DDBJ databases">
        <authorList>
            <person name="Stapleton M."/>
            <person name="Carlson J.W."/>
            <person name="Chavez C."/>
            <person name="Frise E."/>
            <person name="George R.A."/>
            <person name="Pacleb J.M."/>
            <person name="Park S."/>
            <person name="Wan K.H."/>
            <person name="Yu C."/>
            <person name="Rubin G.M."/>
            <person name="Celniker S.E."/>
        </authorList>
    </citation>
    <scope>NUCLEOTIDE SEQUENCE [LARGE SCALE MRNA]</scope>
    <source>
        <strain>Berkeley</strain>
        <tissue>Embryo</tissue>
    </source>
</reference>
<reference key="5">
    <citation type="journal article" date="2002" name="Genome Biol.">
        <title>A Drosophila full-length cDNA resource.</title>
        <authorList>
            <person name="Stapleton M."/>
            <person name="Carlson J.W."/>
            <person name="Brokstein P."/>
            <person name="Yu C."/>
            <person name="Champe M."/>
            <person name="George R.A."/>
            <person name="Guarin H."/>
            <person name="Kronmiller B."/>
            <person name="Pacleb J.M."/>
            <person name="Park S."/>
            <person name="Wan K.H."/>
            <person name="Rubin G.M."/>
            <person name="Celniker S.E."/>
        </authorList>
    </citation>
    <scope>NUCLEOTIDE SEQUENCE [LARGE SCALE MRNA] OF 369-693</scope>
    <source>
        <strain>Berkeley</strain>
        <tissue>Larva</tissue>
        <tissue>Pupae</tissue>
    </source>
</reference>